<accession>Q5LIJ5</accession>
<name>MURD_BACFN</name>
<gene>
    <name evidence="1" type="primary">murD</name>
    <name type="ordered locus">BF0256</name>
</gene>
<protein>
    <recommendedName>
        <fullName evidence="1">UDP-N-acetylmuramoylalanine--D-glutamate ligase</fullName>
        <ecNumber evidence="1">6.3.2.9</ecNumber>
    </recommendedName>
    <alternativeName>
        <fullName evidence="1">D-glutamic acid-adding enzyme</fullName>
    </alternativeName>
    <alternativeName>
        <fullName evidence="1">UDP-N-acetylmuramoyl-L-alanyl-D-glutamate synthetase</fullName>
    </alternativeName>
</protein>
<proteinExistence type="inferred from homology"/>
<feature type="chain" id="PRO_0000108969" description="UDP-N-acetylmuramoylalanine--D-glutamate ligase">
    <location>
        <begin position="1"/>
        <end position="444"/>
    </location>
</feature>
<feature type="binding site" evidence="1">
    <location>
        <begin position="109"/>
        <end position="115"/>
    </location>
    <ligand>
        <name>ATP</name>
        <dbReference type="ChEBI" id="CHEBI:30616"/>
    </ligand>
</feature>
<reference key="1">
    <citation type="journal article" date="2005" name="Science">
        <title>Extensive DNA inversions in the B. fragilis genome control variable gene expression.</title>
        <authorList>
            <person name="Cerdeno-Tarraga A.-M."/>
            <person name="Patrick S."/>
            <person name="Crossman L.C."/>
            <person name="Blakely G."/>
            <person name="Abratt V."/>
            <person name="Lennard N."/>
            <person name="Poxton I."/>
            <person name="Duerden B."/>
            <person name="Harris B."/>
            <person name="Quail M.A."/>
            <person name="Barron A."/>
            <person name="Clark L."/>
            <person name="Corton C."/>
            <person name="Doggett J."/>
            <person name="Holden M.T.G."/>
            <person name="Larke N."/>
            <person name="Line A."/>
            <person name="Lord A."/>
            <person name="Norbertczak H."/>
            <person name="Ormond D."/>
            <person name="Price C."/>
            <person name="Rabbinowitsch E."/>
            <person name="Woodward J."/>
            <person name="Barrell B.G."/>
            <person name="Parkhill J."/>
        </authorList>
    </citation>
    <scope>NUCLEOTIDE SEQUENCE [LARGE SCALE GENOMIC DNA]</scope>
    <source>
        <strain>ATCC 25285 / DSM 2151 / CCUG 4856 / JCM 11019 / LMG 10263 / NCTC 9343 / Onslow / VPI 2553 / EN-2</strain>
    </source>
</reference>
<organism>
    <name type="scientific">Bacteroides fragilis (strain ATCC 25285 / DSM 2151 / CCUG 4856 / JCM 11019 / LMG 10263 / NCTC 9343 / Onslow / VPI 2553 / EN-2)</name>
    <dbReference type="NCBI Taxonomy" id="272559"/>
    <lineage>
        <taxon>Bacteria</taxon>
        <taxon>Pseudomonadati</taxon>
        <taxon>Bacteroidota</taxon>
        <taxon>Bacteroidia</taxon>
        <taxon>Bacteroidales</taxon>
        <taxon>Bacteroidaceae</taxon>
        <taxon>Bacteroides</taxon>
    </lineage>
</organism>
<sequence length="444" mass="49577">MKRIVVLGAGESGAGAAVLAKVKGFDTFVSDMSAIKDKYKTLLDGHGIAWEEGRHTEEQILSADEVVKSPGIPNDAPLILRLREQGTPIISEIEFAGRYTDAKMICITGSNGKTTTTSLIYHIFKSAGLNVGLAGNIGKSLALQVAEEKHDYYVIELSSFQLDNMYNFRADIAVLMNITPDHLDRYDHCMQNYINAKFRITQNQTSEDAFIFWNDDPIIKRELDKHGIRAHLYPFSAIKEEGSIAYVEDHEVVITEPIAFNMEQEQLALTGQHNLYNSLAAGISANLAGITKEDIRKALSDFQGVEHRLEKVARVRGIDFINDSKATNVNSCWYALQSMTTKTVLILGGKDKGNDYTEIEELVREKCSALVYLGLHNEKLHEFFDRLGLPVAEVQTGMKDAVEAAYKLAKKGETVLLSPCCASFDLFKSYEDRGEQFKKYVREL</sequence>
<comment type="function">
    <text evidence="1">Cell wall formation. Catalyzes the addition of glutamate to the nucleotide precursor UDP-N-acetylmuramoyl-L-alanine (UMA).</text>
</comment>
<comment type="catalytic activity">
    <reaction evidence="1">
        <text>UDP-N-acetyl-alpha-D-muramoyl-L-alanine + D-glutamate + ATP = UDP-N-acetyl-alpha-D-muramoyl-L-alanyl-D-glutamate + ADP + phosphate + H(+)</text>
        <dbReference type="Rhea" id="RHEA:16429"/>
        <dbReference type="ChEBI" id="CHEBI:15378"/>
        <dbReference type="ChEBI" id="CHEBI:29986"/>
        <dbReference type="ChEBI" id="CHEBI:30616"/>
        <dbReference type="ChEBI" id="CHEBI:43474"/>
        <dbReference type="ChEBI" id="CHEBI:83898"/>
        <dbReference type="ChEBI" id="CHEBI:83900"/>
        <dbReference type="ChEBI" id="CHEBI:456216"/>
        <dbReference type="EC" id="6.3.2.9"/>
    </reaction>
</comment>
<comment type="pathway">
    <text evidence="1">Cell wall biogenesis; peptidoglycan biosynthesis.</text>
</comment>
<comment type="subcellular location">
    <subcellularLocation>
        <location evidence="1">Cytoplasm</location>
    </subcellularLocation>
</comment>
<comment type="similarity">
    <text evidence="1">Belongs to the MurCDEF family.</text>
</comment>
<dbReference type="EC" id="6.3.2.9" evidence="1"/>
<dbReference type="EMBL" id="CR626927">
    <property type="protein sequence ID" value="CAH06031.1"/>
    <property type="molecule type" value="Genomic_DNA"/>
</dbReference>
<dbReference type="RefSeq" id="WP_010991956.1">
    <property type="nucleotide sequence ID" value="NZ_UFTH01000001.1"/>
</dbReference>
<dbReference type="SMR" id="Q5LIJ5"/>
<dbReference type="PaxDb" id="272559-BF9343_0252"/>
<dbReference type="GeneID" id="60365878"/>
<dbReference type="KEGG" id="bfs:BF9343_0252"/>
<dbReference type="eggNOG" id="COG0771">
    <property type="taxonomic scope" value="Bacteria"/>
</dbReference>
<dbReference type="HOGENOM" id="CLU_032540_0_0_10"/>
<dbReference type="UniPathway" id="UPA00219"/>
<dbReference type="Proteomes" id="UP000006731">
    <property type="component" value="Chromosome"/>
</dbReference>
<dbReference type="GO" id="GO:0005737">
    <property type="term" value="C:cytoplasm"/>
    <property type="evidence" value="ECO:0007669"/>
    <property type="project" value="UniProtKB-SubCell"/>
</dbReference>
<dbReference type="GO" id="GO:0005524">
    <property type="term" value="F:ATP binding"/>
    <property type="evidence" value="ECO:0007669"/>
    <property type="project" value="UniProtKB-UniRule"/>
</dbReference>
<dbReference type="GO" id="GO:0008764">
    <property type="term" value="F:UDP-N-acetylmuramoylalanine-D-glutamate ligase activity"/>
    <property type="evidence" value="ECO:0007669"/>
    <property type="project" value="UniProtKB-UniRule"/>
</dbReference>
<dbReference type="GO" id="GO:0051301">
    <property type="term" value="P:cell division"/>
    <property type="evidence" value="ECO:0007669"/>
    <property type="project" value="UniProtKB-KW"/>
</dbReference>
<dbReference type="GO" id="GO:0071555">
    <property type="term" value="P:cell wall organization"/>
    <property type="evidence" value="ECO:0007669"/>
    <property type="project" value="UniProtKB-KW"/>
</dbReference>
<dbReference type="GO" id="GO:0009252">
    <property type="term" value="P:peptidoglycan biosynthetic process"/>
    <property type="evidence" value="ECO:0007669"/>
    <property type="project" value="UniProtKB-UniRule"/>
</dbReference>
<dbReference type="GO" id="GO:0008360">
    <property type="term" value="P:regulation of cell shape"/>
    <property type="evidence" value="ECO:0007669"/>
    <property type="project" value="UniProtKB-KW"/>
</dbReference>
<dbReference type="Gene3D" id="3.90.190.20">
    <property type="entry name" value="Mur ligase, C-terminal domain"/>
    <property type="match status" value="1"/>
</dbReference>
<dbReference type="Gene3D" id="3.40.1190.10">
    <property type="entry name" value="Mur-like, catalytic domain"/>
    <property type="match status" value="1"/>
</dbReference>
<dbReference type="Gene3D" id="3.40.50.720">
    <property type="entry name" value="NAD(P)-binding Rossmann-like Domain"/>
    <property type="match status" value="1"/>
</dbReference>
<dbReference type="HAMAP" id="MF_00639">
    <property type="entry name" value="MurD"/>
    <property type="match status" value="1"/>
</dbReference>
<dbReference type="InterPro" id="IPR036565">
    <property type="entry name" value="Mur-like_cat_sf"/>
</dbReference>
<dbReference type="InterPro" id="IPR004101">
    <property type="entry name" value="Mur_ligase_C"/>
</dbReference>
<dbReference type="InterPro" id="IPR036615">
    <property type="entry name" value="Mur_ligase_C_dom_sf"/>
</dbReference>
<dbReference type="InterPro" id="IPR013221">
    <property type="entry name" value="Mur_ligase_cen"/>
</dbReference>
<dbReference type="InterPro" id="IPR005762">
    <property type="entry name" value="MurD"/>
</dbReference>
<dbReference type="NCBIfam" id="TIGR01087">
    <property type="entry name" value="murD"/>
    <property type="match status" value="1"/>
</dbReference>
<dbReference type="PANTHER" id="PTHR43692">
    <property type="entry name" value="UDP-N-ACETYLMURAMOYLALANINE--D-GLUTAMATE LIGASE"/>
    <property type="match status" value="1"/>
</dbReference>
<dbReference type="PANTHER" id="PTHR43692:SF1">
    <property type="entry name" value="UDP-N-ACETYLMURAMOYLALANINE--D-GLUTAMATE LIGASE"/>
    <property type="match status" value="1"/>
</dbReference>
<dbReference type="Pfam" id="PF02875">
    <property type="entry name" value="Mur_ligase_C"/>
    <property type="match status" value="1"/>
</dbReference>
<dbReference type="Pfam" id="PF08245">
    <property type="entry name" value="Mur_ligase_M"/>
    <property type="match status" value="1"/>
</dbReference>
<dbReference type="Pfam" id="PF21799">
    <property type="entry name" value="MurD-like_N"/>
    <property type="match status" value="1"/>
</dbReference>
<dbReference type="Pfam" id="PF21377">
    <property type="entry name" value="MurD_N"/>
    <property type="match status" value="1"/>
</dbReference>
<dbReference type="SUPFAM" id="SSF51984">
    <property type="entry name" value="MurCD N-terminal domain"/>
    <property type="match status" value="1"/>
</dbReference>
<dbReference type="SUPFAM" id="SSF53623">
    <property type="entry name" value="MurD-like peptide ligases, catalytic domain"/>
    <property type="match status" value="1"/>
</dbReference>
<dbReference type="SUPFAM" id="SSF53244">
    <property type="entry name" value="MurD-like peptide ligases, peptide-binding domain"/>
    <property type="match status" value="1"/>
</dbReference>
<evidence type="ECO:0000255" key="1">
    <source>
        <dbReference type="HAMAP-Rule" id="MF_00639"/>
    </source>
</evidence>
<keyword id="KW-0067">ATP-binding</keyword>
<keyword id="KW-0131">Cell cycle</keyword>
<keyword id="KW-0132">Cell division</keyword>
<keyword id="KW-0133">Cell shape</keyword>
<keyword id="KW-0961">Cell wall biogenesis/degradation</keyword>
<keyword id="KW-0963">Cytoplasm</keyword>
<keyword id="KW-0436">Ligase</keyword>
<keyword id="KW-0547">Nucleotide-binding</keyword>
<keyword id="KW-0573">Peptidoglycan synthesis</keyword>